<name>MRKC_DICDI</name>
<proteinExistence type="inferred from homology"/>
<keyword id="KW-0067">ATP-binding</keyword>
<keyword id="KW-0175">Coiled coil</keyword>
<keyword id="KW-0418">Kinase</keyword>
<keyword id="KW-0547">Nucleotide-binding</keyword>
<keyword id="KW-1185">Reference proteome</keyword>
<keyword id="KW-0723">Serine/threonine-protein kinase</keyword>
<keyword id="KW-0808">Transferase</keyword>
<gene>
    <name type="primary">mrkC</name>
    <name type="ORF">DDB_G0281895</name>
</gene>
<sequence>MESNKSSSHGDVSTSPSFLNNHHQFNNGGDIIPKKKKNRIMHVGSYEVGKTLGNGTFGKVKLGTNICTKENVAIKFIKNNKLSGKQKETCFREIDIMKLLDHPNIVKLLDVVDKREEEGTTYLIVEYVSGGELFDYIVAREYIKEKEARKFFRQMISAIEYCHANLIVHRDLKPENLLLDSNGDIKISDFGLSNNIQPGKLLESFCGSPLYAAPEILKAEKYLGPPVDIWSLGVIMYAVLCGNLPWEGDSQAEISFNSVHGNYEDPTHLSAEAVHILRRMIVPNPKDRATIQELKNHPWTNIDYQEIPKSHLPPRDAVHEIKEDIFAHLISLGFPNTKETRDIILKNENCGIVNVYHLLLDRYASKEVENLKSKLELLSKRKKSFSDKRNPSTNSLASIPEDSNDLSSNNNNNQQQQNSPPSKTNSSSTSSSNRESNNNSPSQGSIKEISLDELDNHIEQLDNDIENSDNNKSSSLTRRSSDPNKDIENSLKAQGLFSSYSAPGVPNSDHNYDFETYQQQQQYQQQLHQQQLQLQQQYQSQIQSDISFPHDDVEIESYSIQQQQLQQQQQQQQEQHKEDNNKPNTNLRRNSIAVSTFMEDEPNEMPINNLYKMNEQIQQQPIIGGSGNVMRSQFNQTLPTIDQQPVIEAPKTRRMSLDSRMLNGDQQSLVEKNQHMASPRTSKGIFKSSTTTTKSPEKTIIELKRSLEESGLFTKKKGPYLFLCFDEDNSVKFQIEIVKICNLDLTGIQLKRLSGDTWKYKDICTELVESMKL</sequence>
<protein>
    <recommendedName>
        <fullName>Probable serine/threonine-protein kinase MARK-C</fullName>
        <ecNumber>2.7.11.1</ecNumber>
    </recommendedName>
</protein>
<feature type="chain" id="PRO_0000338411" description="Probable serine/threonine-protein kinase MARK-C">
    <location>
        <begin position="1"/>
        <end position="773"/>
    </location>
</feature>
<feature type="domain" description="Protein kinase" evidence="2">
    <location>
        <begin position="46"/>
        <end position="300"/>
    </location>
</feature>
<feature type="domain" description="KA1" evidence="3">
    <location>
        <begin position="724"/>
        <end position="773"/>
    </location>
</feature>
<feature type="region of interest" description="Disordered" evidence="5">
    <location>
        <begin position="1"/>
        <end position="32"/>
    </location>
</feature>
<feature type="region of interest" description="Disordered" evidence="5">
    <location>
        <begin position="382"/>
        <end position="445"/>
    </location>
</feature>
<feature type="region of interest" description="Disordered" evidence="5">
    <location>
        <begin position="462"/>
        <end position="487"/>
    </location>
</feature>
<feature type="region of interest" description="Disordered" evidence="5">
    <location>
        <begin position="558"/>
        <end position="588"/>
    </location>
</feature>
<feature type="coiled-coil region" evidence="1">
    <location>
        <begin position="362"/>
        <end position="390"/>
    </location>
</feature>
<feature type="coiled-coil region" evidence="1">
    <location>
        <begin position="445"/>
        <end position="474"/>
    </location>
</feature>
<feature type="compositionally biased region" description="Polar residues" evidence="5">
    <location>
        <begin position="1"/>
        <end position="27"/>
    </location>
</feature>
<feature type="compositionally biased region" description="Low complexity" evidence="5">
    <location>
        <begin position="405"/>
        <end position="443"/>
    </location>
</feature>
<feature type="compositionally biased region" description="Polar residues" evidence="5">
    <location>
        <begin position="468"/>
        <end position="478"/>
    </location>
</feature>
<feature type="compositionally biased region" description="Low complexity" evidence="5">
    <location>
        <begin position="561"/>
        <end position="573"/>
    </location>
</feature>
<feature type="active site" description="Proton acceptor" evidence="2 4">
    <location>
        <position position="171"/>
    </location>
</feature>
<feature type="binding site" evidence="2">
    <location>
        <begin position="52"/>
        <end position="60"/>
    </location>
    <ligand>
        <name>ATP</name>
        <dbReference type="ChEBI" id="CHEBI:30616"/>
    </ligand>
</feature>
<feature type="binding site" evidence="2">
    <location>
        <position position="75"/>
    </location>
    <ligand>
        <name>ATP</name>
        <dbReference type="ChEBI" id="CHEBI:30616"/>
    </ligand>
</feature>
<comment type="catalytic activity">
    <reaction>
        <text>L-seryl-[protein] + ATP = O-phospho-L-seryl-[protein] + ADP + H(+)</text>
        <dbReference type="Rhea" id="RHEA:17989"/>
        <dbReference type="Rhea" id="RHEA-COMP:9863"/>
        <dbReference type="Rhea" id="RHEA-COMP:11604"/>
        <dbReference type="ChEBI" id="CHEBI:15378"/>
        <dbReference type="ChEBI" id="CHEBI:29999"/>
        <dbReference type="ChEBI" id="CHEBI:30616"/>
        <dbReference type="ChEBI" id="CHEBI:83421"/>
        <dbReference type="ChEBI" id="CHEBI:456216"/>
        <dbReference type="EC" id="2.7.11.1"/>
    </reaction>
</comment>
<comment type="catalytic activity">
    <reaction>
        <text>L-threonyl-[protein] + ATP = O-phospho-L-threonyl-[protein] + ADP + H(+)</text>
        <dbReference type="Rhea" id="RHEA:46608"/>
        <dbReference type="Rhea" id="RHEA-COMP:11060"/>
        <dbReference type="Rhea" id="RHEA-COMP:11605"/>
        <dbReference type="ChEBI" id="CHEBI:15378"/>
        <dbReference type="ChEBI" id="CHEBI:30013"/>
        <dbReference type="ChEBI" id="CHEBI:30616"/>
        <dbReference type="ChEBI" id="CHEBI:61977"/>
        <dbReference type="ChEBI" id="CHEBI:456216"/>
        <dbReference type="EC" id="2.7.11.1"/>
    </reaction>
</comment>
<comment type="similarity">
    <text evidence="6">Belongs to the protein kinase superfamily. CAMK Ser/Thr protein kinase family. SNF1 subfamily.</text>
</comment>
<organism>
    <name type="scientific">Dictyostelium discoideum</name>
    <name type="common">Social amoeba</name>
    <dbReference type="NCBI Taxonomy" id="44689"/>
    <lineage>
        <taxon>Eukaryota</taxon>
        <taxon>Amoebozoa</taxon>
        <taxon>Evosea</taxon>
        <taxon>Eumycetozoa</taxon>
        <taxon>Dictyostelia</taxon>
        <taxon>Dictyosteliales</taxon>
        <taxon>Dictyosteliaceae</taxon>
        <taxon>Dictyostelium</taxon>
    </lineage>
</organism>
<evidence type="ECO:0000255" key="1"/>
<evidence type="ECO:0000255" key="2">
    <source>
        <dbReference type="PROSITE-ProRule" id="PRU00159"/>
    </source>
</evidence>
<evidence type="ECO:0000255" key="3">
    <source>
        <dbReference type="PROSITE-ProRule" id="PRU00565"/>
    </source>
</evidence>
<evidence type="ECO:0000255" key="4">
    <source>
        <dbReference type="PROSITE-ProRule" id="PRU10027"/>
    </source>
</evidence>
<evidence type="ECO:0000256" key="5">
    <source>
        <dbReference type="SAM" id="MobiDB-lite"/>
    </source>
</evidence>
<evidence type="ECO:0000305" key="6"/>
<accession>Q54TA3</accession>
<dbReference type="EC" id="2.7.11.1"/>
<dbReference type="EMBL" id="AAFI02000043">
    <property type="protein sequence ID" value="EAL66507.1"/>
    <property type="molecule type" value="Genomic_DNA"/>
</dbReference>
<dbReference type="RefSeq" id="XP_640486.1">
    <property type="nucleotide sequence ID" value="XM_635394.1"/>
</dbReference>
<dbReference type="SMR" id="Q54TA3"/>
<dbReference type="FunCoup" id="Q54TA3">
    <property type="interactions" value="24"/>
</dbReference>
<dbReference type="STRING" id="44689.Q54TA3"/>
<dbReference type="PaxDb" id="44689-DDB0216323"/>
<dbReference type="EnsemblProtists" id="EAL66507">
    <property type="protein sequence ID" value="EAL66507"/>
    <property type="gene ID" value="DDB_G0281895"/>
</dbReference>
<dbReference type="GeneID" id="8623300"/>
<dbReference type="KEGG" id="ddi:DDB_G0281895"/>
<dbReference type="dictyBase" id="DDB_G0281895">
    <property type="gene designation" value="mrkC"/>
</dbReference>
<dbReference type="VEuPathDB" id="AmoebaDB:DDB_G0281895"/>
<dbReference type="eggNOG" id="KOG0586">
    <property type="taxonomic scope" value="Eukaryota"/>
</dbReference>
<dbReference type="HOGENOM" id="CLU_361869_0_0_1"/>
<dbReference type="InParanoid" id="Q54TA3"/>
<dbReference type="OMA" id="TWKYKDI"/>
<dbReference type="Reactome" id="R-DDI-5673000">
    <property type="pathway name" value="RAF activation"/>
</dbReference>
<dbReference type="Reactome" id="R-DDI-5675221">
    <property type="pathway name" value="Negative regulation of MAPK pathway"/>
</dbReference>
<dbReference type="PRO" id="PR:Q54TA3"/>
<dbReference type="Proteomes" id="UP000002195">
    <property type="component" value="Chromosome 3"/>
</dbReference>
<dbReference type="GO" id="GO:0005737">
    <property type="term" value="C:cytoplasm"/>
    <property type="evidence" value="ECO:0000318"/>
    <property type="project" value="GO_Central"/>
</dbReference>
<dbReference type="GO" id="GO:0005524">
    <property type="term" value="F:ATP binding"/>
    <property type="evidence" value="ECO:0007669"/>
    <property type="project" value="UniProtKB-KW"/>
</dbReference>
<dbReference type="GO" id="GO:0106310">
    <property type="term" value="F:protein serine kinase activity"/>
    <property type="evidence" value="ECO:0007669"/>
    <property type="project" value="RHEA"/>
</dbReference>
<dbReference type="GO" id="GO:0004674">
    <property type="term" value="F:protein serine/threonine kinase activity"/>
    <property type="evidence" value="ECO:0000318"/>
    <property type="project" value="GO_Central"/>
</dbReference>
<dbReference type="GO" id="GO:0035556">
    <property type="term" value="P:intracellular signal transduction"/>
    <property type="evidence" value="ECO:0000318"/>
    <property type="project" value="GO_Central"/>
</dbReference>
<dbReference type="CDD" id="cd12121">
    <property type="entry name" value="MARK_C_like"/>
    <property type="match status" value="1"/>
</dbReference>
<dbReference type="CDD" id="cd14003">
    <property type="entry name" value="STKc_AMPK-like"/>
    <property type="match status" value="1"/>
</dbReference>
<dbReference type="FunFam" id="1.10.510.10:FF:000958">
    <property type="entry name" value="Non-specific serine/threonine protein kinase"/>
    <property type="match status" value="1"/>
</dbReference>
<dbReference type="FunFam" id="3.30.200.20:FF:000003">
    <property type="entry name" value="Non-specific serine/threonine protein kinase"/>
    <property type="match status" value="1"/>
</dbReference>
<dbReference type="FunFam" id="3.30.310.80:FF:000011">
    <property type="entry name" value="Non-specific serine/threonine protein kinase"/>
    <property type="match status" value="1"/>
</dbReference>
<dbReference type="Gene3D" id="3.30.310.80">
    <property type="entry name" value="Kinase associated domain 1, KA1"/>
    <property type="match status" value="1"/>
</dbReference>
<dbReference type="Gene3D" id="1.10.510.10">
    <property type="entry name" value="Transferase(Phosphotransferase) domain 1"/>
    <property type="match status" value="1"/>
</dbReference>
<dbReference type="InterPro" id="IPR028375">
    <property type="entry name" value="KA1/Ssp2_C"/>
</dbReference>
<dbReference type="InterPro" id="IPR001772">
    <property type="entry name" value="KA1_dom"/>
</dbReference>
<dbReference type="InterPro" id="IPR011009">
    <property type="entry name" value="Kinase-like_dom_sf"/>
</dbReference>
<dbReference type="InterPro" id="IPR000719">
    <property type="entry name" value="Prot_kinase_dom"/>
</dbReference>
<dbReference type="InterPro" id="IPR017441">
    <property type="entry name" value="Protein_kinase_ATP_BS"/>
</dbReference>
<dbReference type="InterPro" id="IPR008271">
    <property type="entry name" value="Ser/Thr_kinase_AS"/>
</dbReference>
<dbReference type="PANTHER" id="PTHR24346">
    <property type="entry name" value="MAP/MICROTUBULE AFFINITY-REGULATING KINASE"/>
    <property type="match status" value="1"/>
</dbReference>
<dbReference type="PANTHER" id="PTHR24346:SF107">
    <property type="entry name" value="SERINE_THREONINE-PROTEIN KINASE CHK1"/>
    <property type="match status" value="1"/>
</dbReference>
<dbReference type="Pfam" id="PF02149">
    <property type="entry name" value="KA1"/>
    <property type="match status" value="1"/>
</dbReference>
<dbReference type="Pfam" id="PF00069">
    <property type="entry name" value="Pkinase"/>
    <property type="match status" value="1"/>
</dbReference>
<dbReference type="SMART" id="SM00220">
    <property type="entry name" value="S_TKc"/>
    <property type="match status" value="1"/>
</dbReference>
<dbReference type="SUPFAM" id="SSF103243">
    <property type="entry name" value="KA1-like"/>
    <property type="match status" value="1"/>
</dbReference>
<dbReference type="SUPFAM" id="SSF56112">
    <property type="entry name" value="Protein kinase-like (PK-like)"/>
    <property type="match status" value="1"/>
</dbReference>
<dbReference type="PROSITE" id="PS50032">
    <property type="entry name" value="KA1"/>
    <property type="match status" value="1"/>
</dbReference>
<dbReference type="PROSITE" id="PS00107">
    <property type="entry name" value="PROTEIN_KINASE_ATP"/>
    <property type="match status" value="1"/>
</dbReference>
<dbReference type="PROSITE" id="PS50011">
    <property type="entry name" value="PROTEIN_KINASE_DOM"/>
    <property type="match status" value="1"/>
</dbReference>
<dbReference type="PROSITE" id="PS00108">
    <property type="entry name" value="PROTEIN_KINASE_ST"/>
    <property type="match status" value="1"/>
</dbReference>
<reference key="1">
    <citation type="journal article" date="2005" name="Nature">
        <title>The genome of the social amoeba Dictyostelium discoideum.</title>
        <authorList>
            <person name="Eichinger L."/>
            <person name="Pachebat J.A."/>
            <person name="Gloeckner G."/>
            <person name="Rajandream M.A."/>
            <person name="Sucgang R."/>
            <person name="Berriman M."/>
            <person name="Song J."/>
            <person name="Olsen R."/>
            <person name="Szafranski K."/>
            <person name="Xu Q."/>
            <person name="Tunggal B."/>
            <person name="Kummerfeld S."/>
            <person name="Madera M."/>
            <person name="Konfortov B.A."/>
            <person name="Rivero F."/>
            <person name="Bankier A.T."/>
            <person name="Lehmann R."/>
            <person name="Hamlin N."/>
            <person name="Davies R."/>
            <person name="Gaudet P."/>
            <person name="Fey P."/>
            <person name="Pilcher K."/>
            <person name="Chen G."/>
            <person name="Saunders D."/>
            <person name="Sodergren E.J."/>
            <person name="Davis P."/>
            <person name="Kerhornou A."/>
            <person name="Nie X."/>
            <person name="Hall N."/>
            <person name="Anjard C."/>
            <person name="Hemphill L."/>
            <person name="Bason N."/>
            <person name="Farbrother P."/>
            <person name="Desany B."/>
            <person name="Just E."/>
            <person name="Morio T."/>
            <person name="Rost R."/>
            <person name="Churcher C.M."/>
            <person name="Cooper J."/>
            <person name="Haydock S."/>
            <person name="van Driessche N."/>
            <person name="Cronin A."/>
            <person name="Goodhead I."/>
            <person name="Muzny D.M."/>
            <person name="Mourier T."/>
            <person name="Pain A."/>
            <person name="Lu M."/>
            <person name="Harper D."/>
            <person name="Lindsay R."/>
            <person name="Hauser H."/>
            <person name="James K.D."/>
            <person name="Quiles M."/>
            <person name="Madan Babu M."/>
            <person name="Saito T."/>
            <person name="Buchrieser C."/>
            <person name="Wardroper A."/>
            <person name="Felder M."/>
            <person name="Thangavelu M."/>
            <person name="Johnson D."/>
            <person name="Knights A."/>
            <person name="Loulseged H."/>
            <person name="Mungall K.L."/>
            <person name="Oliver K."/>
            <person name="Price C."/>
            <person name="Quail M.A."/>
            <person name="Urushihara H."/>
            <person name="Hernandez J."/>
            <person name="Rabbinowitsch E."/>
            <person name="Steffen D."/>
            <person name="Sanders M."/>
            <person name="Ma J."/>
            <person name="Kohara Y."/>
            <person name="Sharp S."/>
            <person name="Simmonds M.N."/>
            <person name="Spiegler S."/>
            <person name="Tivey A."/>
            <person name="Sugano S."/>
            <person name="White B."/>
            <person name="Walker D."/>
            <person name="Woodward J.R."/>
            <person name="Winckler T."/>
            <person name="Tanaka Y."/>
            <person name="Shaulsky G."/>
            <person name="Schleicher M."/>
            <person name="Weinstock G.M."/>
            <person name="Rosenthal A."/>
            <person name="Cox E.C."/>
            <person name="Chisholm R.L."/>
            <person name="Gibbs R.A."/>
            <person name="Loomis W.F."/>
            <person name="Platzer M."/>
            <person name="Kay R.R."/>
            <person name="Williams J.G."/>
            <person name="Dear P.H."/>
            <person name="Noegel A.A."/>
            <person name="Barrell B.G."/>
            <person name="Kuspa A."/>
        </authorList>
    </citation>
    <scope>NUCLEOTIDE SEQUENCE [LARGE SCALE GENOMIC DNA]</scope>
    <source>
        <strain>AX4</strain>
    </source>
</reference>